<dbReference type="EMBL" id="CP000143">
    <property type="protein sequence ID" value="ABA80410.1"/>
    <property type="molecule type" value="Genomic_DNA"/>
</dbReference>
<dbReference type="RefSeq" id="YP_354311.1">
    <property type="nucleotide sequence ID" value="NC_007493.2"/>
</dbReference>
<dbReference type="SMR" id="Q3IYH4"/>
<dbReference type="STRING" id="272943.RSP_1229"/>
<dbReference type="EnsemblBacteria" id="ABA80410">
    <property type="protein sequence ID" value="ABA80410"/>
    <property type="gene ID" value="RSP_1229"/>
</dbReference>
<dbReference type="KEGG" id="rsp:RSP_1229"/>
<dbReference type="PATRIC" id="fig|272943.9.peg.3210"/>
<dbReference type="eggNOG" id="COG0445">
    <property type="taxonomic scope" value="Bacteria"/>
</dbReference>
<dbReference type="OrthoDB" id="9815560at2"/>
<dbReference type="PhylomeDB" id="Q3IYH4"/>
<dbReference type="Proteomes" id="UP000002703">
    <property type="component" value="Chromosome 1"/>
</dbReference>
<dbReference type="GO" id="GO:0005829">
    <property type="term" value="C:cytosol"/>
    <property type="evidence" value="ECO:0007669"/>
    <property type="project" value="TreeGrafter"/>
</dbReference>
<dbReference type="GO" id="GO:0050660">
    <property type="term" value="F:flavin adenine dinucleotide binding"/>
    <property type="evidence" value="ECO:0007669"/>
    <property type="project" value="UniProtKB-UniRule"/>
</dbReference>
<dbReference type="GO" id="GO:0030488">
    <property type="term" value="P:tRNA methylation"/>
    <property type="evidence" value="ECO:0007669"/>
    <property type="project" value="TreeGrafter"/>
</dbReference>
<dbReference type="GO" id="GO:0002098">
    <property type="term" value="P:tRNA wobble uridine modification"/>
    <property type="evidence" value="ECO:0007669"/>
    <property type="project" value="InterPro"/>
</dbReference>
<dbReference type="FunFam" id="1.10.150.570:FF:000001">
    <property type="entry name" value="tRNA uridine 5-carboxymethylaminomethyl modification enzyme MnmG"/>
    <property type="match status" value="1"/>
</dbReference>
<dbReference type="FunFam" id="3.50.50.60:FF:000002">
    <property type="entry name" value="tRNA uridine 5-carboxymethylaminomethyl modification enzyme MnmG"/>
    <property type="match status" value="1"/>
</dbReference>
<dbReference type="Gene3D" id="3.50.50.60">
    <property type="entry name" value="FAD/NAD(P)-binding domain"/>
    <property type="match status" value="2"/>
</dbReference>
<dbReference type="Gene3D" id="1.10.150.570">
    <property type="entry name" value="GidA associated domain, C-terminal subdomain"/>
    <property type="match status" value="1"/>
</dbReference>
<dbReference type="HAMAP" id="MF_00129">
    <property type="entry name" value="MnmG_GidA"/>
    <property type="match status" value="1"/>
</dbReference>
<dbReference type="InterPro" id="IPR036188">
    <property type="entry name" value="FAD/NAD-bd_sf"/>
</dbReference>
<dbReference type="InterPro" id="IPR049312">
    <property type="entry name" value="GIDA_C_N"/>
</dbReference>
<dbReference type="InterPro" id="IPR004416">
    <property type="entry name" value="MnmG"/>
</dbReference>
<dbReference type="InterPro" id="IPR002218">
    <property type="entry name" value="MnmG-rel"/>
</dbReference>
<dbReference type="InterPro" id="IPR020595">
    <property type="entry name" value="MnmG-rel_CS"/>
</dbReference>
<dbReference type="InterPro" id="IPR026904">
    <property type="entry name" value="MnmG_C"/>
</dbReference>
<dbReference type="InterPro" id="IPR047001">
    <property type="entry name" value="MnmG_C_subdom"/>
</dbReference>
<dbReference type="InterPro" id="IPR044920">
    <property type="entry name" value="MnmG_C_subdom_sf"/>
</dbReference>
<dbReference type="InterPro" id="IPR040131">
    <property type="entry name" value="MnmG_N"/>
</dbReference>
<dbReference type="NCBIfam" id="TIGR00136">
    <property type="entry name" value="mnmG_gidA"/>
    <property type="match status" value="1"/>
</dbReference>
<dbReference type="PANTHER" id="PTHR11806">
    <property type="entry name" value="GLUCOSE INHIBITED DIVISION PROTEIN A"/>
    <property type="match status" value="1"/>
</dbReference>
<dbReference type="PANTHER" id="PTHR11806:SF0">
    <property type="entry name" value="PROTEIN MTO1 HOMOLOG, MITOCHONDRIAL"/>
    <property type="match status" value="1"/>
</dbReference>
<dbReference type="Pfam" id="PF01134">
    <property type="entry name" value="GIDA"/>
    <property type="match status" value="1"/>
</dbReference>
<dbReference type="Pfam" id="PF21680">
    <property type="entry name" value="GIDA_C_1st"/>
    <property type="match status" value="1"/>
</dbReference>
<dbReference type="Pfam" id="PF13932">
    <property type="entry name" value="SAM_GIDA_C"/>
    <property type="match status" value="1"/>
</dbReference>
<dbReference type="SMART" id="SM01228">
    <property type="entry name" value="GIDA_assoc_3"/>
    <property type="match status" value="1"/>
</dbReference>
<dbReference type="SUPFAM" id="SSF51905">
    <property type="entry name" value="FAD/NAD(P)-binding domain"/>
    <property type="match status" value="1"/>
</dbReference>
<dbReference type="PROSITE" id="PS01280">
    <property type="entry name" value="GIDA_1"/>
    <property type="match status" value="1"/>
</dbReference>
<dbReference type="PROSITE" id="PS01281">
    <property type="entry name" value="GIDA_2"/>
    <property type="match status" value="1"/>
</dbReference>
<accession>Q3IYH4</accession>
<proteinExistence type="inferred from homology"/>
<keyword id="KW-0963">Cytoplasm</keyword>
<keyword id="KW-0274">FAD</keyword>
<keyword id="KW-0285">Flavoprotein</keyword>
<keyword id="KW-0520">NAD</keyword>
<keyword id="KW-1185">Reference proteome</keyword>
<keyword id="KW-0819">tRNA processing</keyword>
<gene>
    <name evidence="1" type="primary">mnmG</name>
    <name evidence="1" type="synonym">gidA</name>
    <name type="ordered locus">RHOS4_28420</name>
    <name type="ORF">RSP_1229</name>
</gene>
<reference key="1">
    <citation type="submission" date="2005-09" db="EMBL/GenBank/DDBJ databases">
        <title>Complete sequence of chromosome 1 of Rhodobacter sphaeroides 2.4.1.</title>
        <authorList>
            <person name="Copeland A."/>
            <person name="Lucas S."/>
            <person name="Lapidus A."/>
            <person name="Barry K."/>
            <person name="Detter J.C."/>
            <person name="Glavina T."/>
            <person name="Hammon N."/>
            <person name="Israni S."/>
            <person name="Pitluck S."/>
            <person name="Richardson P."/>
            <person name="Mackenzie C."/>
            <person name="Choudhary M."/>
            <person name="Larimer F."/>
            <person name="Hauser L.J."/>
            <person name="Land M."/>
            <person name="Donohue T.J."/>
            <person name="Kaplan S."/>
        </authorList>
    </citation>
    <scope>NUCLEOTIDE SEQUENCE [LARGE SCALE GENOMIC DNA]</scope>
    <source>
        <strain>ATCC 17023 / DSM 158 / JCM 6121 / CCUG 31486 / LMG 2827 / NBRC 12203 / NCIMB 8253 / ATH 2.4.1.</strain>
    </source>
</reference>
<name>MNMG_CERS4</name>
<organism>
    <name type="scientific">Cereibacter sphaeroides (strain ATCC 17023 / DSM 158 / JCM 6121 / CCUG 31486 / LMG 2827 / NBRC 12203 / NCIMB 8253 / ATH 2.4.1.)</name>
    <name type="common">Rhodobacter sphaeroides</name>
    <dbReference type="NCBI Taxonomy" id="272943"/>
    <lineage>
        <taxon>Bacteria</taxon>
        <taxon>Pseudomonadati</taxon>
        <taxon>Pseudomonadota</taxon>
        <taxon>Alphaproteobacteria</taxon>
        <taxon>Rhodobacterales</taxon>
        <taxon>Paracoccaceae</taxon>
        <taxon>Cereibacter</taxon>
    </lineage>
</organism>
<feature type="chain" id="PRO_0000345323" description="tRNA uridine 5-carboxymethylaminomethyl modification enzyme MnmG">
    <location>
        <begin position="1"/>
        <end position="626"/>
    </location>
</feature>
<feature type="binding site" evidence="1">
    <location>
        <begin position="15"/>
        <end position="20"/>
    </location>
    <ligand>
        <name>FAD</name>
        <dbReference type="ChEBI" id="CHEBI:57692"/>
    </ligand>
</feature>
<feature type="binding site" evidence="1">
    <location>
        <position position="127"/>
    </location>
    <ligand>
        <name>FAD</name>
        <dbReference type="ChEBI" id="CHEBI:57692"/>
    </ligand>
</feature>
<feature type="binding site" evidence="1">
    <location>
        <position position="182"/>
    </location>
    <ligand>
        <name>FAD</name>
        <dbReference type="ChEBI" id="CHEBI:57692"/>
    </ligand>
</feature>
<feature type="binding site" evidence="1">
    <location>
        <begin position="274"/>
        <end position="288"/>
    </location>
    <ligand>
        <name>NAD(+)</name>
        <dbReference type="ChEBI" id="CHEBI:57540"/>
    </ligand>
</feature>
<feature type="binding site" evidence="1">
    <location>
        <position position="371"/>
    </location>
    <ligand>
        <name>FAD</name>
        <dbReference type="ChEBI" id="CHEBI:57692"/>
    </ligand>
</feature>
<comment type="function">
    <text evidence="1">NAD-binding protein involved in the addition of a carboxymethylaminomethyl (cmnm) group at the wobble position (U34) of certain tRNAs, forming tRNA-cmnm(5)s(2)U34.</text>
</comment>
<comment type="cofactor">
    <cofactor evidence="1">
        <name>FAD</name>
        <dbReference type="ChEBI" id="CHEBI:57692"/>
    </cofactor>
</comment>
<comment type="subunit">
    <text evidence="1">Homodimer. Heterotetramer of two MnmE and two MnmG subunits.</text>
</comment>
<comment type="subcellular location">
    <subcellularLocation>
        <location evidence="1">Cytoplasm</location>
    </subcellularLocation>
</comment>
<comment type="similarity">
    <text evidence="1">Belongs to the MnmG family.</text>
</comment>
<protein>
    <recommendedName>
        <fullName evidence="1">tRNA uridine 5-carboxymethylaminomethyl modification enzyme MnmG</fullName>
    </recommendedName>
    <alternativeName>
        <fullName evidence="1">Glucose-inhibited division protein A</fullName>
    </alternativeName>
</protein>
<evidence type="ECO:0000255" key="1">
    <source>
        <dbReference type="HAMAP-Rule" id="MF_00129"/>
    </source>
</evidence>
<sequence>MRVFHVKHFDVVVIGGGHAGCEAAAAAARMGVQVALFTLRKSGLGVMSCNPAIGGLGKGHLVREIDALDGIMGRAADEAGIQFRLLNRKKGPAVQGPRAQADRRLYREAVQRLLAAQPGLTVIEGEVVDLQVNGGRVQGVSLADGTSVWAGRVILTSGTFLNGIIHIGDQRRPGGRMGDDPSQRLAAVLGELSLARGRLKTGTPPRLDGRTIRWTELEMQPGDEDPVVFSFLNRAPKARQIACGITHTNARTHQIVRDNLSRSAMYGGHIEGVGPRYCPSIEDKIVRFADKEAHQVFLEPEGLDDDTVYPNGISTSLPAEVQEAYVRTIAGLEDVRILQPGYAIEYDYFDPRELRPTLEVKALGGLYFAGQINGTTGYEEAAAQGLAAGLNAALSIREREPLHFSRSGSYLGVMIDDLTSRGVTEPYRMFTSRAEFRLSLRADNADQRLTPIGLDLGCVSDARRESFNRKRELLEKGRALLEGSSFTPSQLNELGIQVSQDGMRRTAFAVMAFGEEAASAVARGVEGYGDLPEEIRQQLAKDGLYAQFILRQEEEAAALKRDEAIRIPADFDYAPLSGLSSELKSKLMRARPSTIAQAAQLEGMTPSALTLILARLRRAGRDAAAV</sequence>